<reference key="1">
    <citation type="journal article" date="2008" name="BMC Genomics">
        <title>The missing link: Bordetella petrii is endowed with both the metabolic versatility of environmental bacteria and virulence traits of pathogenic Bordetellae.</title>
        <authorList>
            <person name="Gross R."/>
            <person name="Guzman C.A."/>
            <person name="Sebaihia M."/>
            <person name="Martin dos Santos V.A.P."/>
            <person name="Pieper D.H."/>
            <person name="Koebnik R."/>
            <person name="Lechner M."/>
            <person name="Bartels D."/>
            <person name="Buhrmester J."/>
            <person name="Choudhuri J.V."/>
            <person name="Ebensen T."/>
            <person name="Gaigalat L."/>
            <person name="Herrmann S."/>
            <person name="Khachane A.N."/>
            <person name="Larisch C."/>
            <person name="Link S."/>
            <person name="Linke B."/>
            <person name="Meyer F."/>
            <person name="Mormann S."/>
            <person name="Nakunst D."/>
            <person name="Rueckert C."/>
            <person name="Schneiker-Bekel S."/>
            <person name="Schulze K."/>
            <person name="Voerholter F.-J."/>
            <person name="Yevsa T."/>
            <person name="Engle J.T."/>
            <person name="Goldman W.E."/>
            <person name="Puehler A."/>
            <person name="Goebel U.B."/>
            <person name="Goesmann A."/>
            <person name="Bloecker H."/>
            <person name="Kaiser O."/>
            <person name="Martinez-Arias R."/>
        </authorList>
    </citation>
    <scope>NUCLEOTIDE SEQUENCE [LARGE SCALE GENOMIC DNA]</scope>
    <source>
        <strain>ATCC BAA-461 / DSM 12804 / CCUG 43448</strain>
    </source>
</reference>
<accession>A9IT77</accession>
<evidence type="ECO:0000255" key="1">
    <source>
        <dbReference type="HAMAP-Rule" id="MF_01540"/>
    </source>
</evidence>
<evidence type="ECO:0000256" key="2">
    <source>
        <dbReference type="SAM" id="MobiDB-lite"/>
    </source>
</evidence>
<feature type="chain" id="PRO_0000388479" description="Sulfite reductase [NADPH] hemoprotein beta-component">
    <location>
        <begin position="1"/>
        <end position="587"/>
    </location>
</feature>
<feature type="region of interest" description="Disordered" evidence="2">
    <location>
        <begin position="1"/>
        <end position="20"/>
    </location>
</feature>
<feature type="compositionally biased region" description="Polar residues" evidence="2">
    <location>
        <begin position="1"/>
        <end position="13"/>
    </location>
</feature>
<feature type="binding site" evidence="1">
    <location>
        <position position="439"/>
    </location>
    <ligand>
        <name>[4Fe-4S] cluster</name>
        <dbReference type="ChEBI" id="CHEBI:49883"/>
    </ligand>
</feature>
<feature type="binding site" evidence="1">
    <location>
        <position position="445"/>
    </location>
    <ligand>
        <name>[4Fe-4S] cluster</name>
        <dbReference type="ChEBI" id="CHEBI:49883"/>
    </ligand>
</feature>
<feature type="binding site" evidence="1">
    <location>
        <position position="484"/>
    </location>
    <ligand>
        <name>[4Fe-4S] cluster</name>
        <dbReference type="ChEBI" id="CHEBI:49883"/>
    </ligand>
</feature>
<feature type="binding site" evidence="1">
    <location>
        <position position="488"/>
    </location>
    <ligand>
        <name>[4Fe-4S] cluster</name>
        <dbReference type="ChEBI" id="CHEBI:49883"/>
    </ligand>
</feature>
<feature type="binding site" description="axial binding residue" evidence="1">
    <location>
        <position position="488"/>
    </location>
    <ligand>
        <name>siroheme</name>
        <dbReference type="ChEBI" id="CHEBI:60052"/>
    </ligand>
    <ligandPart>
        <name>Fe</name>
        <dbReference type="ChEBI" id="CHEBI:18248"/>
    </ligandPart>
</feature>
<comment type="function">
    <text evidence="1">Component of the sulfite reductase complex that catalyzes the 6-electron reduction of sulfite to sulfide. This is one of several activities required for the biosynthesis of L-cysteine from sulfate.</text>
</comment>
<comment type="catalytic activity">
    <reaction evidence="1">
        <text>hydrogen sulfide + 3 NADP(+) + 3 H2O = sulfite + 3 NADPH + 4 H(+)</text>
        <dbReference type="Rhea" id="RHEA:13801"/>
        <dbReference type="ChEBI" id="CHEBI:15377"/>
        <dbReference type="ChEBI" id="CHEBI:15378"/>
        <dbReference type="ChEBI" id="CHEBI:17359"/>
        <dbReference type="ChEBI" id="CHEBI:29919"/>
        <dbReference type="ChEBI" id="CHEBI:57783"/>
        <dbReference type="ChEBI" id="CHEBI:58349"/>
        <dbReference type="EC" id="1.8.1.2"/>
    </reaction>
</comment>
<comment type="cofactor">
    <cofactor evidence="1">
        <name>siroheme</name>
        <dbReference type="ChEBI" id="CHEBI:60052"/>
    </cofactor>
    <text evidence="1">Binds 1 siroheme per subunit.</text>
</comment>
<comment type="cofactor">
    <cofactor evidence="1">
        <name>[4Fe-4S] cluster</name>
        <dbReference type="ChEBI" id="CHEBI:49883"/>
    </cofactor>
    <text evidence="1">Binds 1 [4Fe-4S] cluster per subunit.</text>
</comment>
<comment type="pathway">
    <text evidence="1">Sulfur metabolism; hydrogen sulfide biosynthesis; hydrogen sulfide from sulfite (NADPH route): step 1/1.</text>
</comment>
<comment type="subunit">
    <text evidence="1">Alpha(8)-beta(8). The alpha component is a flavoprotein, the beta component is a hemoprotein.</text>
</comment>
<comment type="similarity">
    <text evidence="1">Belongs to the nitrite and sulfite reductase 4Fe-4S domain family.</text>
</comment>
<name>CYSI_BORPD</name>
<sequence>MQSTDNDLSQSPPKLSADEQLKAASDQLRGTILRSLADPLTGAVSDSDAKLLKFHGIYQQDDREQRDERRRQKLEPAYQFMIRVRLPGGVCSAAQWLKLDELARAYGGDSLRLTTRQTFQFHWVLKHNLQATLQGLHEVLLDTIAACGDDARGVMCTADPRLSALHAAVYDIARQASDHAIPRMRAYHEIWWGEQRVASSDAGPEEPFYGQTYLPRKFKIGFVIPPVNDIDVYAQDLGFIAIAGDDGALQGFNVAIGGGMGRTDQAPATYPRLADVIGFVPPEAVIATCDAVMGVQRDYGNRKDRARARFKYTIDEHGLDAVKAEIERRLGFALQPARPFRFDSNGDALGWQTGEDGRHHVTLFIQNGRLVNLPGLPLLEGLREIARVHTGSFRITPNQNVVIADIGDAERPRIEALLRQYQLEAGPSTSALRLNSMACVALPTCGLAMAESERYLPELVGKIEALLRTHGLEREPITIRMSGCPNGCSRPYIAEIGLTGRAPGKYNLYLGGGFHGQRLNRMVLENAAEAAILALLDTTLAHYARDRHEGEHFGDFAVRAGYVEAVTAGRDFNQRRAPGAGATAPHA</sequence>
<keyword id="KW-0004">4Fe-4S</keyword>
<keyword id="KW-0028">Amino-acid biosynthesis</keyword>
<keyword id="KW-0198">Cysteine biosynthesis</keyword>
<keyword id="KW-0349">Heme</keyword>
<keyword id="KW-0408">Iron</keyword>
<keyword id="KW-0411">Iron-sulfur</keyword>
<keyword id="KW-0479">Metal-binding</keyword>
<keyword id="KW-0521">NADP</keyword>
<keyword id="KW-0560">Oxidoreductase</keyword>
<gene>
    <name evidence="1" type="primary">cysI</name>
    <name type="ordered locus">Bpet3049</name>
</gene>
<proteinExistence type="inferred from homology"/>
<dbReference type="EC" id="1.8.1.2" evidence="1"/>
<dbReference type="EMBL" id="AM902716">
    <property type="protein sequence ID" value="CAP43391.1"/>
    <property type="molecule type" value="Genomic_DNA"/>
</dbReference>
<dbReference type="SMR" id="A9IT77"/>
<dbReference type="STRING" id="94624.Bpet3049"/>
<dbReference type="KEGG" id="bpt:Bpet3049"/>
<dbReference type="eggNOG" id="COG0155">
    <property type="taxonomic scope" value="Bacteria"/>
</dbReference>
<dbReference type="UniPathway" id="UPA00140">
    <property type="reaction ID" value="UER00207"/>
</dbReference>
<dbReference type="Proteomes" id="UP000001225">
    <property type="component" value="Chromosome"/>
</dbReference>
<dbReference type="GO" id="GO:0009337">
    <property type="term" value="C:sulfite reductase complex (NADPH)"/>
    <property type="evidence" value="ECO:0007669"/>
    <property type="project" value="InterPro"/>
</dbReference>
<dbReference type="GO" id="GO:0051539">
    <property type="term" value="F:4 iron, 4 sulfur cluster binding"/>
    <property type="evidence" value="ECO:0007669"/>
    <property type="project" value="UniProtKB-KW"/>
</dbReference>
<dbReference type="GO" id="GO:0020037">
    <property type="term" value="F:heme binding"/>
    <property type="evidence" value="ECO:0007669"/>
    <property type="project" value="InterPro"/>
</dbReference>
<dbReference type="GO" id="GO:0046872">
    <property type="term" value="F:metal ion binding"/>
    <property type="evidence" value="ECO:0007669"/>
    <property type="project" value="UniProtKB-KW"/>
</dbReference>
<dbReference type="GO" id="GO:0050661">
    <property type="term" value="F:NADP binding"/>
    <property type="evidence" value="ECO:0007669"/>
    <property type="project" value="InterPro"/>
</dbReference>
<dbReference type="GO" id="GO:0050311">
    <property type="term" value="F:sulfite reductase (ferredoxin) activity"/>
    <property type="evidence" value="ECO:0007669"/>
    <property type="project" value="TreeGrafter"/>
</dbReference>
<dbReference type="GO" id="GO:0004783">
    <property type="term" value="F:sulfite reductase (NADPH) activity"/>
    <property type="evidence" value="ECO:0007669"/>
    <property type="project" value="UniProtKB-UniRule"/>
</dbReference>
<dbReference type="GO" id="GO:0019344">
    <property type="term" value="P:cysteine biosynthetic process"/>
    <property type="evidence" value="ECO:0007669"/>
    <property type="project" value="UniProtKB-KW"/>
</dbReference>
<dbReference type="GO" id="GO:0070814">
    <property type="term" value="P:hydrogen sulfide biosynthetic process"/>
    <property type="evidence" value="ECO:0007669"/>
    <property type="project" value="UniProtKB-UniRule"/>
</dbReference>
<dbReference type="GO" id="GO:0000103">
    <property type="term" value="P:sulfate assimilation"/>
    <property type="evidence" value="ECO:0007669"/>
    <property type="project" value="UniProtKB-UniRule"/>
</dbReference>
<dbReference type="FunFam" id="3.30.413.10:FF:000003">
    <property type="entry name" value="Sulfite reductase [NADPH] hemoprotein beta-component"/>
    <property type="match status" value="1"/>
</dbReference>
<dbReference type="Gene3D" id="3.30.413.10">
    <property type="entry name" value="Sulfite Reductase Hemoprotein, domain 1"/>
    <property type="match status" value="2"/>
</dbReference>
<dbReference type="Gene3D" id="3.90.480.10">
    <property type="entry name" value="Sulfite Reductase Hemoprotein,Domain 2"/>
    <property type="match status" value="1"/>
</dbReference>
<dbReference type="HAMAP" id="MF_01540">
    <property type="entry name" value="CysI"/>
    <property type="match status" value="1"/>
</dbReference>
<dbReference type="InterPro" id="IPR011786">
    <property type="entry name" value="CysI"/>
</dbReference>
<dbReference type="InterPro" id="IPR005117">
    <property type="entry name" value="NiRdtase/SiRdtase_haem-b_fer"/>
</dbReference>
<dbReference type="InterPro" id="IPR036136">
    <property type="entry name" value="Nit/Sulf_reduc_fer-like_dom_sf"/>
</dbReference>
<dbReference type="InterPro" id="IPR006067">
    <property type="entry name" value="NO2/SO3_Rdtase_4Fe4S_dom"/>
</dbReference>
<dbReference type="InterPro" id="IPR045169">
    <property type="entry name" value="NO2/SO3_Rdtase_4Fe4S_prot"/>
</dbReference>
<dbReference type="InterPro" id="IPR045854">
    <property type="entry name" value="NO2/SO3_Rdtase_4Fe4S_sf"/>
</dbReference>
<dbReference type="InterPro" id="IPR006066">
    <property type="entry name" value="NO2/SO3_Rdtase_FeS/sirohaem_BS"/>
</dbReference>
<dbReference type="NCBIfam" id="TIGR02041">
    <property type="entry name" value="CysI"/>
    <property type="match status" value="1"/>
</dbReference>
<dbReference type="NCBIfam" id="NF010029">
    <property type="entry name" value="PRK13504.1"/>
    <property type="match status" value="1"/>
</dbReference>
<dbReference type="PANTHER" id="PTHR11493:SF47">
    <property type="entry name" value="SULFITE REDUCTASE [NADPH] SUBUNIT BETA"/>
    <property type="match status" value="1"/>
</dbReference>
<dbReference type="PANTHER" id="PTHR11493">
    <property type="entry name" value="SULFITE REDUCTASE [NADPH] SUBUNIT BETA-RELATED"/>
    <property type="match status" value="1"/>
</dbReference>
<dbReference type="Pfam" id="PF01077">
    <property type="entry name" value="NIR_SIR"/>
    <property type="match status" value="2"/>
</dbReference>
<dbReference type="Pfam" id="PF03460">
    <property type="entry name" value="NIR_SIR_ferr"/>
    <property type="match status" value="2"/>
</dbReference>
<dbReference type="PRINTS" id="PR00397">
    <property type="entry name" value="SIROHAEM"/>
</dbReference>
<dbReference type="SUPFAM" id="SSF56014">
    <property type="entry name" value="Nitrite and sulphite reductase 4Fe-4S domain-like"/>
    <property type="match status" value="2"/>
</dbReference>
<dbReference type="SUPFAM" id="SSF55124">
    <property type="entry name" value="Nitrite/Sulfite reductase N-terminal domain-like"/>
    <property type="match status" value="2"/>
</dbReference>
<dbReference type="PROSITE" id="PS00365">
    <property type="entry name" value="NIR_SIR"/>
    <property type="match status" value="1"/>
</dbReference>
<organism>
    <name type="scientific">Bordetella petrii (strain ATCC BAA-461 / DSM 12804 / CCUG 43448)</name>
    <dbReference type="NCBI Taxonomy" id="340100"/>
    <lineage>
        <taxon>Bacteria</taxon>
        <taxon>Pseudomonadati</taxon>
        <taxon>Pseudomonadota</taxon>
        <taxon>Betaproteobacteria</taxon>
        <taxon>Burkholderiales</taxon>
        <taxon>Alcaligenaceae</taxon>
        <taxon>Bordetella</taxon>
    </lineage>
</organism>
<protein>
    <recommendedName>
        <fullName evidence="1">Sulfite reductase [NADPH] hemoprotein beta-component</fullName>
        <shortName evidence="1">SiR-HP</shortName>
        <shortName evidence="1">SiRHP</shortName>
        <ecNumber evidence="1">1.8.1.2</ecNumber>
    </recommendedName>
</protein>